<comment type="function">
    <text evidence="1">Catalyzes the transfer of the diacylglyceryl group from phosphatidylglycerol to the sulfhydryl group of the N-terminal cysteine of a prolipoprotein, the first step in the formation of mature lipoproteins.</text>
</comment>
<comment type="catalytic activity">
    <reaction evidence="1">
        <text>L-cysteinyl-[prolipoprotein] + a 1,2-diacyl-sn-glycero-3-phospho-(1'-sn-glycerol) = an S-1,2-diacyl-sn-glyceryl-L-cysteinyl-[prolipoprotein] + sn-glycerol 1-phosphate + H(+)</text>
        <dbReference type="Rhea" id="RHEA:56712"/>
        <dbReference type="Rhea" id="RHEA-COMP:14679"/>
        <dbReference type="Rhea" id="RHEA-COMP:14680"/>
        <dbReference type="ChEBI" id="CHEBI:15378"/>
        <dbReference type="ChEBI" id="CHEBI:29950"/>
        <dbReference type="ChEBI" id="CHEBI:57685"/>
        <dbReference type="ChEBI" id="CHEBI:64716"/>
        <dbReference type="ChEBI" id="CHEBI:140658"/>
        <dbReference type="EC" id="2.5.1.145"/>
    </reaction>
</comment>
<comment type="pathway">
    <text>Protein modification; lipoprotein biosynthesis (diacylglyceryl transfer).</text>
</comment>
<comment type="subcellular location">
    <subcellularLocation>
        <location evidence="1">Cell inner membrane</location>
        <topology evidence="1">Multi-pass membrane protein</topology>
    </subcellularLocation>
</comment>
<comment type="similarity">
    <text evidence="3">Belongs to the Lgt family.</text>
</comment>
<reference key="1">
    <citation type="journal article" date="1997" name="Mol. Microbiol.">
        <title>Evidence for two chemosensory pathways in Rhodobacter sphaeroides.</title>
        <authorList>
            <person name="Hamblin P.A."/>
            <person name="Maguire B.A."/>
            <person name="Grishanin R.N."/>
            <person name="Armitage J.P."/>
        </authorList>
    </citation>
    <scope>NUCLEOTIDE SEQUENCE [GENOMIC DNA]</scope>
    <source>
        <strain>WS8</strain>
    </source>
</reference>
<protein>
    <recommendedName>
        <fullName evidence="1">Phosphatidylglycerol--prolipoprotein diacylglyceryl transferase</fullName>
        <ecNumber evidence="1">2.5.1.145</ecNumber>
    </recommendedName>
</protein>
<accession>O33551</accession>
<dbReference type="EC" id="2.5.1.145" evidence="1"/>
<dbReference type="EMBL" id="AJ000977">
    <property type="protein sequence ID" value="CAA04426.1"/>
    <property type="molecule type" value="Genomic_DNA"/>
</dbReference>
<dbReference type="PIR" id="T45014">
    <property type="entry name" value="T45014"/>
</dbReference>
<dbReference type="SMR" id="O33551"/>
<dbReference type="UniPathway" id="UPA00664"/>
<dbReference type="GO" id="GO:0005886">
    <property type="term" value="C:plasma membrane"/>
    <property type="evidence" value="ECO:0007669"/>
    <property type="project" value="UniProtKB-SubCell"/>
</dbReference>
<dbReference type="GO" id="GO:0008961">
    <property type="term" value="F:phosphatidylglycerol-prolipoprotein diacylglyceryl transferase activity"/>
    <property type="evidence" value="ECO:0007669"/>
    <property type="project" value="UniProtKB-EC"/>
</dbReference>
<dbReference type="GO" id="GO:0042158">
    <property type="term" value="P:lipoprotein biosynthetic process"/>
    <property type="evidence" value="ECO:0007669"/>
    <property type="project" value="InterPro"/>
</dbReference>
<dbReference type="InterPro" id="IPR001640">
    <property type="entry name" value="Lgt"/>
</dbReference>
<dbReference type="NCBIfam" id="TIGR00544">
    <property type="entry name" value="lgt"/>
    <property type="match status" value="1"/>
</dbReference>
<dbReference type="PANTHER" id="PTHR30589:SF0">
    <property type="entry name" value="PHOSPHATIDYLGLYCEROL--PROLIPOPROTEIN DIACYLGLYCERYL TRANSFERASE"/>
    <property type="match status" value="1"/>
</dbReference>
<dbReference type="PANTHER" id="PTHR30589">
    <property type="entry name" value="PROLIPOPROTEIN DIACYLGLYCERYL TRANSFERASE"/>
    <property type="match status" value="1"/>
</dbReference>
<dbReference type="Pfam" id="PF01790">
    <property type="entry name" value="LGT"/>
    <property type="match status" value="1"/>
</dbReference>
<dbReference type="PROSITE" id="PS01311">
    <property type="entry name" value="LGT"/>
    <property type="match status" value="1"/>
</dbReference>
<evidence type="ECO:0000250" key="1"/>
<evidence type="ECO:0000255" key="2"/>
<evidence type="ECO:0000305" key="3"/>
<name>LGT_CERSP</name>
<sequence>MSYIPFPDISPELFSIELFGVTFALRWYALAYIAGLLIGWRLVLRMIRAERLWSFGPPMTEDQLERLLTWVILGVILGGRLGFVLFYQPAHYLAHPLDILKVWEGGMSFHGGFLGVMTALVAFCLKERISILPVADLLAAATPPGLFLGRIANFINAELWGRPTTLPWGVAFPGEAAQSCPGIEGICARHPSQIYEAGLEGI</sequence>
<feature type="chain" id="PRO_0000172662" description="Phosphatidylglycerol--prolipoprotein diacylglyceryl transferase">
    <location>
        <begin position="1"/>
        <end position="202" status="greater than"/>
    </location>
</feature>
<feature type="transmembrane region" description="Helical" evidence="2">
    <location>
        <begin position="18"/>
        <end position="38"/>
    </location>
</feature>
<feature type="transmembrane region" description="Helical" evidence="2">
    <location>
        <begin position="67"/>
        <end position="87"/>
    </location>
</feature>
<feature type="transmembrane region" description="Helical" evidence="2">
    <location>
        <begin position="105"/>
        <end position="125"/>
    </location>
</feature>
<feature type="transmembrane region" description="Helical" evidence="2">
    <location>
        <begin position="129"/>
        <end position="149"/>
    </location>
</feature>
<feature type="transmembrane region" description="Helical" evidence="2">
    <location>
        <begin position="166"/>
        <end position="186"/>
    </location>
</feature>
<feature type="non-terminal residue">
    <location>
        <position position="202"/>
    </location>
</feature>
<gene>
    <name type="primary">lgt</name>
    <name type="synonym">umpA</name>
</gene>
<organism>
    <name type="scientific">Cereibacter sphaeroides</name>
    <name type="common">Rhodobacter sphaeroides</name>
    <dbReference type="NCBI Taxonomy" id="1063"/>
    <lineage>
        <taxon>Bacteria</taxon>
        <taxon>Pseudomonadati</taxon>
        <taxon>Pseudomonadota</taxon>
        <taxon>Alphaproteobacteria</taxon>
        <taxon>Rhodobacterales</taxon>
        <taxon>Paracoccaceae</taxon>
        <taxon>Cereibacter</taxon>
    </lineage>
</organism>
<proteinExistence type="inferred from homology"/>
<keyword id="KW-0997">Cell inner membrane</keyword>
<keyword id="KW-1003">Cell membrane</keyword>
<keyword id="KW-0472">Membrane</keyword>
<keyword id="KW-0808">Transferase</keyword>
<keyword id="KW-0812">Transmembrane</keyword>
<keyword id="KW-1133">Transmembrane helix</keyword>